<evidence type="ECO:0000250" key="1"/>
<evidence type="ECO:0000255" key="2">
    <source>
        <dbReference type="PROSITE-ProRule" id="PRU01081"/>
    </source>
</evidence>
<evidence type="ECO:0000269" key="3">
    <source>
    </source>
</evidence>
<evidence type="ECO:0000305" key="4"/>
<proteinExistence type="evidence at protein level"/>
<organism>
    <name type="scientific">Arabidopsis thaliana</name>
    <name type="common">Mouse-ear cress</name>
    <dbReference type="NCBI Taxonomy" id="3702"/>
    <lineage>
        <taxon>Eukaryota</taxon>
        <taxon>Viridiplantae</taxon>
        <taxon>Streptophyta</taxon>
        <taxon>Embryophyta</taxon>
        <taxon>Tracheophyta</taxon>
        <taxon>Spermatophyta</taxon>
        <taxon>Magnoliopsida</taxon>
        <taxon>eudicotyledons</taxon>
        <taxon>Gunneridae</taxon>
        <taxon>Pentapetalae</taxon>
        <taxon>rosids</taxon>
        <taxon>malvids</taxon>
        <taxon>Brassicales</taxon>
        <taxon>Brassicaceae</taxon>
        <taxon>Camelineae</taxon>
        <taxon>Arabidopsis</taxon>
    </lineage>
</organism>
<keyword id="KW-0927">Auxin signaling pathway</keyword>
<keyword id="KW-0539">Nucleus</keyword>
<keyword id="KW-1185">Reference proteome</keyword>
<keyword id="KW-0678">Repressor</keyword>
<keyword id="KW-0804">Transcription</keyword>
<keyword id="KW-0805">Transcription regulation</keyword>
<comment type="function">
    <text evidence="3">Aux/IAA proteins are short-lived transcriptional factors that function as repressors of early auxin response genes at low auxin concentrations. Repression is thought to result from the interaction with auxin response factors (ARFs), proteins that bind to the auxin-responsive promoter element (AuxRE). Formation of heterodimers with ARF proteins may alter their ability to modulate early auxin response genes expression.</text>
</comment>
<comment type="subunit">
    <text evidence="1">Homodimers and heterodimers.</text>
</comment>
<comment type="interaction">
    <interactant intactId="EBI-3946459">
        <id>Q9C5X0</id>
    </interactant>
    <interactant intactId="EBI-25522986">
        <id>Q9FIW5</id>
        <label>ANAC094</label>
    </interactant>
    <organismsDiffer>false</organismsDiffer>
    <experiments>3</experiments>
</comment>
<comment type="interaction">
    <interactant intactId="EBI-3946459">
        <id>Q9C5X0</id>
    </interactant>
    <interactant intactId="EBI-2324259">
        <id>Q8L7G0</id>
        <label>ARF1</label>
    </interactant>
    <organismsDiffer>false</organismsDiffer>
    <experiments>4</experiments>
</comment>
<comment type="interaction">
    <interactant intactId="EBI-3946459">
        <id>Q9C5X0</id>
    </interactant>
    <interactant intactId="EBI-3946783">
        <id>Q9C5W9</id>
        <label>ARF18</label>
    </interactant>
    <organismsDiffer>false</organismsDiffer>
    <experiments>4</experiments>
</comment>
<comment type="interaction">
    <interactant intactId="EBI-3946459">
        <id>Q9C5X0</id>
    </interactant>
    <interactant intactId="EBI-529887">
        <id>Q8RYC8</id>
        <label>ARF19</label>
    </interactant>
    <organismsDiffer>false</organismsDiffer>
    <experiments>4</experiments>
</comment>
<comment type="interaction">
    <interactant intactId="EBI-3946459">
        <id>Q9C5X0</id>
    </interactant>
    <interactant intactId="EBI-1799262">
        <id>Q94JM3</id>
        <label>ARF2</label>
    </interactant>
    <organismsDiffer>false</organismsDiffer>
    <experiments>6</experiments>
</comment>
<comment type="interaction">
    <interactant intactId="EBI-3946459">
        <id>Q9C5X0</id>
    </interactant>
    <interactant intactId="EBI-3946762">
        <id>Q9XED8</id>
        <label>ARF9</label>
    </interactant>
    <organismsDiffer>false</organismsDiffer>
    <experiments>4</experiments>
</comment>
<comment type="interaction">
    <interactant intactId="EBI-3946459">
        <id>Q9C5X0</id>
    </interactant>
    <interactant intactId="EBI-25523851">
        <id>Q9FIK2</id>
        <label>At5g47790</label>
    </interactant>
    <organismsDiffer>false</organismsDiffer>
    <experiments>3</experiments>
</comment>
<comment type="interaction">
    <interactant intactId="EBI-3946459">
        <id>Q9C5X0</id>
    </interactant>
    <interactant intactId="EBI-15192745">
        <id>Q9LST3</id>
        <label>At5g60142</label>
    </interactant>
    <organismsDiffer>false</organismsDiffer>
    <experiments>3</experiments>
</comment>
<comment type="interaction">
    <interactant intactId="EBI-3946459">
        <id>Q9C5X0</id>
    </interactant>
    <interactant intactId="EBI-1153783">
        <id>Q38897</id>
        <label>BEL1</label>
    </interactant>
    <organismsDiffer>false</organismsDiffer>
    <experiments>3</experiments>
</comment>
<comment type="interaction">
    <interactant intactId="EBI-3946459">
        <id>Q9C5X0</id>
    </interactant>
    <interactant intactId="EBI-15194565">
        <id>Q8S3D2</id>
        <label>BHLH87</label>
    </interactant>
    <organismsDiffer>false</organismsDiffer>
    <experiments>3</experiments>
</comment>
<comment type="interaction">
    <interactant intactId="EBI-3946459">
        <id>Q9C5X0</id>
    </interactant>
    <interactant intactId="EBI-25511859">
        <id>Q9SKT1</id>
        <label>ERF053</label>
    </interactant>
    <organismsDiffer>false</organismsDiffer>
    <experiments>6</experiments>
</comment>
<comment type="interaction">
    <interactant intactId="EBI-3946459">
        <id>Q9C5X0</id>
    </interactant>
    <interactant intactId="EBI-15202888">
        <id>Q6J9Q2</id>
        <label>ERF086</label>
    </interactant>
    <organismsDiffer>false</organismsDiffer>
    <experiments>3</experiments>
</comment>
<comment type="interaction">
    <interactant intactId="EBI-3946459">
        <id>Q9C5X0</id>
    </interactant>
    <interactant intactId="EBI-1536925">
        <id>Q9FYK5</id>
        <label>ESR2</label>
    </interactant>
    <organismsDiffer>false</organismsDiffer>
    <experiments>3</experiments>
</comment>
<comment type="interaction">
    <interactant intactId="EBI-3946459">
        <id>Q9C5X0</id>
    </interactant>
    <interactant intactId="EBI-1396652">
        <id>Q8L8A6</id>
        <label>GRF5</label>
    </interactant>
    <organismsDiffer>false</organismsDiffer>
    <experiments>3</experiments>
</comment>
<comment type="interaction">
    <interactant intactId="EBI-3946459">
        <id>Q9C5X0</id>
    </interactant>
    <interactant intactId="EBI-630505">
        <id>P49677</id>
        <label>IAA1</label>
    </interactant>
    <organismsDiffer>false</organismsDiffer>
    <experiments>6</experiments>
</comment>
<comment type="interaction">
    <interactant intactId="EBI-3946459">
        <id>Q9C5X0</id>
    </interactant>
    <interactant intactId="EBI-3946434">
        <id>Q38828</id>
        <label>IAA10</label>
    </interactant>
    <organismsDiffer>false</organismsDiffer>
    <experiments>11</experiments>
</comment>
<comment type="interaction">
    <interactant intactId="EBI-3946459">
        <id>Q9C5X0</id>
    </interactant>
    <interactant intactId="EBI-1554143">
        <id>Q38831</id>
        <label>IAA13</label>
    </interactant>
    <organismsDiffer>false</organismsDiffer>
    <experiments>6</experiments>
</comment>
<comment type="interaction">
    <interactant intactId="EBI-3946459">
        <id>Q9C5X0</id>
    </interactant>
    <interactant intactId="EBI-2295562">
        <id>Q38832</id>
        <label>IAA14</label>
    </interactant>
    <organismsDiffer>false</organismsDiffer>
    <experiments>3</experiments>
</comment>
<comment type="interaction">
    <interactant intactId="EBI-3946459">
        <id>Q9C5X0</id>
    </interactant>
    <interactant intactId="EBI-25524519">
        <id>A0A2H1ZEF6</id>
        <label>IAA15</label>
    </interactant>
    <organismsDiffer>false</organismsDiffer>
    <experiments>5</experiments>
</comment>
<comment type="interaction">
    <interactant intactId="EBI-3946459">
        <id>Q9C5X0</id>
    </interactant>
    <interactant intactId="EBI-632231">
        <id>O24407</id>
        <label>IAA16</label>
    </interactant>
    <organismsDiffer>false</organismsDiffer>
    <experiments>6</experiments>
</comment>
<comment type="interaction">
    <interactant intactId="EBI-3946459">
        <id>Q9C5X0</id>
    </interactant>
    <interactant intactId="EBI-632243">
        <id>P93830</id>
        <label>IAA17</label>
    </interactant>
    <organismsDiffer>false</organismsDiffer>
    <experiments>11</experiments>
</comment>
<comment type="interaction">
    <interactant intactId="EBI-3946459">
        <id>Q9C5X0</id>
    </interactant>
    <interactant intactId="EBI-632257">
        <id>O24409</id>
        <label>IAA19</label>
    </interactant>
    <organismsDiffer>false</organismsDiffer>
    <experiments>8</experiments>
</comment>
<comment type="interaction">
    <interactant intactId="EBI-3946459">
        <id>Q9C5X0</id>
    </interactant>
    <interactant intactId="EBI-632343">
        <id>P49678</id>
        <label>IAA2</label>
    </interactant>
    <organismsDiffer>false</organismsDiffer>
    <experiments>6</experiments>
</comment>
<comment type="interaction">
    <interactant intactId="EBI-3946459">
        <id>Q9C5X0</id>
    </interactant>
    <interactant intactId="EBI-632272">
        <id>O24410</id>
        <label>IAA20</label>
    </interactant>
    <organismsDiffer>false</organismsDiffer>
    <experiments>6</experiments>
</comment>
<comment type="interaction">
    <interactant intactId="EBI-3946459">
        <id>Q9C5X0</id>
    </interactant>
    <interactant intactId="EBI-3947418">
        <id>Q8LAL2</id>
        <label>IAA26</label>
    </interactant>
    <organismsDiffer>false</organismsDiffer>
    <experiments>7</experiments>
</comment>
<comment type="interaction">
    <interactant intactId="EBI-3946459">
        <id>Q9C5X0</id>
    </interactant>
    <interactant intactId="EBI-3946677">
        <id>Q9ZSY8</id>
        <label>IAA27</label>
    </interactant>
    <organismsDiffer>false</organismsDiffer>
    <experiments>8</experiments>
</comment>
<comment type="interaction">
    <interactant intactId="EBI-3946459">
        <id>Q9C5X0</id>
    </interactant>
    <interactant intactId="EBI-3133404">
        <id>Q9XFM0</id>
        <label>IAA28</label>
    </interactant>
    <organismsDiffer>false</organismsDiffer>
    <experiments>8</experiments>
</comment>
<comment type="interaction">
    <interactant intactId="EBI-3946459">
        <id>Q9C5X0</id>
    </interactant>
    <interactant intactId="EBI-307174">
        <id>Q38822</id>
        <label>IAA3</label>
    </interactant>
    <organismsDiffer>false</organismsDiffer>
    <experiments>9</experiments>
</comment>
<comment type="interaction">
    <interactant intactId="EBI-3946459">
        <id>Q9C5X0</id>
    </interactant>
    <interactant intactId="EBI-3946408">
        <id>Q8H174</id>
        <label>IAA31</label>
    </interactant>
    <organismsDiffer>false</organismsDiffer>
    <experiments>8</experiments>
</comment>
<comment type="interaction">
    <interactant intactId="EBI-3946459">
        <id>Q9C5X0</id>
    </interactant>
    <interactant intactId="EBI-3946739">
        <id>Q9FKM7</id>
        <label>IAA33</label>
    </interactant>
    <organismsDiffer>false</organismsDiffer>
    <experiments>9</experiments>
</comment>
<comment type="interaction">
    <interactant intactId="EBI-3946459">
        <id>Q9C5X0</id>
    </interactant>
    <interactant intactId="EBI-632187">
        <id>P33077</id>
        <label>IAA4</label>
    </interactant>
    <organismsDiffer>false</organismsDiffer>
    <experiments>6</experiments>
</comment>
<comment type="interaction">
    <interactant intactId="EBI-3946459">
        <id>Q9C5X0</id>
    </interactant>
    <interactant intactId="EBI-3946487">
        <id>P33078</id>
        <label>IAA5</label>
    </interactant>
    <organismsDiffer>false</organismsDiffer>
    <experiments>6</experiments>
</comment>
<comment type="interaction">
    <interactant intactId="EBI-3946459">
        <id>Q9C5X0</id>
    </interactant>
    <interactant intactId="EBI-1554124">
        <id>Q38824</id>
        <label>IAA6</label>
    </interactant>
    <organismsDiffer>false</organismsDiffer>
    <experiments>8</experiments>
</comment>
<comment type="interaction">
    <interactant intactId="EBI-3946459">
        <id>Q9C5X0</id>
    </interactant>
    <interactant intactId="EBI-602959">
        <id>Q38825</id>
        <label>IAA7</label>
    </interactant>
    <organismsDiffer>false</organismsDiffer>
    <experiments>10</experiments>
</comment>
<comment type="interaction">
    <interactant intactId="EBI-3946459">
        <id>Q9C5X0</id>
    </interactant>
    <interactant intactId="EBI-632200">
        <id>Q38826</id>
        <label>IAA8</label>
    </interactant>
    <organismsDiffer>false</organismsDiffer>
    <experiments>6</experiments>
</comment>
<comment type="interaction">
    <interactant intactId="EBI-3946459">
        <id>Q9C5X0</id>
    </interactant>
    <interactant intactId="EBI-632216">
        <id>Q38827</id>
        <label>IAA9</label>
    </interactant>
    <organismsDiffer>false</organismsDiffer>
    <experiments>4</experiments>
</comment>
<comment type="interaction">
    <interactant intactId="EBI-3946459">
        <id>Q9C5X0</id>
    </interactant>
    <interactant intactId="EBI-2112286">
        <id>O65154</id>
        <label>KIWI</label>
    </interactant>
    <organismsDiffer>false</organismsDiffer>
    <experiments>3</experiments>
</comment>
<comment type="interaction">
    <interactant intactId="EBI-3946459">
        <id>Q9C5X0</id>
    </interactant>
    <interactant intactId="EBI-21497119">
        <id>Q9LTC4</id>
        <label>MYB15</label>
    </interactant>
    <organismsDiffer>false</organismsDiffer>
    <experiments>3</experiments>
</comment>
<comment type="interaction">
    <interactant intactId="EBI-3946459">
        <id>Q9C5X0</id>
    </interactant>
    <interactant intactId="EBI-1238013">
        <id>O22179</id>
        <label>MYB70</label>
    </interactant>
    <organismsDiffer>false</organismsDiffer>
    <experiments>3</experiments>
</comment>
<comment type="interaction">
    <interactant intactId="EBI-3946459">
        <id>Q9C5X0</id>
    </interactant>
    <interactant intactId="EBI-25506855">
        <id>O23160</id>
        <label>MYB73</label>
    </interactant>
    <organismsDiffer>false</organismsDiffer>
    <experiments>3</experiments>
</comment>
<comment type="interaction">
    <interactant intactId="EBI-3946459">
        <id>Q9C5X0</id>
    </interactant>
    <interactant intactId="EBI-2475789">
        <id>Q9SFD8</id>
        <label>NFYB9</label>
    </interactant>
    <organismsDiffer>false</organismsDiffer>
    <experiments>3</experiments>
</comment>
<comment type="interaction">
    <interactant intactId="EBI-3946459">
        <id>Q9C5X0</id>
    </interactant>
    <interactant intactId="EBI-4425094">
        <id>O82239</id>
        <label>RFI2</label>
    </interactant>
    <organismsDiffer>false</organismsDiffer>
    <experiments>3</experiments>
</comment>
<comment type="interaction">
    <interactant intactId="EBI-3946459">
        <id>Q9C5X0</id>
    </interactant>
    <interactant intactId="EBI-15205274">
        <id>Q9XGX0</id>
        <label>SHI</label>
    </interactant>
    <organismsDiffer>false</organismsDiffer>
    <experiments>3</experiments>
</comment>
<comment type="interaction">
    <interactant intactId="EBI-3946459">
        <id>Q9C5X0</id>
    </interactant>
    <interactant intactId="EBI-1536703">
        <id>Q9FUA4</id>
        <label>SPT</label>
    </interactant>
    <organismsDiffer>false</organismsDiffer>
    <experiments>3</experiments>
</comment>
<comment type="interaction">
    <interactant intactId="EBI-3946459">
        <id>Q9C5X0</id>
    </interactant>
    <interactant intactId="EBI-4424877">
        <id>Q9S7W5</id>
        <label>TCP13</label>
    </interactant>
    <organismsDiffer>false</organismsDiffer>
    <experiments>3</experiments>
</comment>
<comment type="interaction">
    <interactant intactId="EBI-3946459">
        <id>Q9C5X0</id>
    </interactant>
    <interactant intactId="EBI-4426144">
        <id>Q9C9L2</id>
        <label>TCP15</label>
    </interactant>
    <organismsDiffer>false</organismsDiffer>
    <experiments>5</experiments>
</comment>
<comment type="interaction">
    <interactant intactId="EBI-3946459">
        <id>Q9C5X0</id>
    </interactant>
    <interactant intactId="EBI-25522447">
        <id>Q9MAH8</id>
        <label>TCP3</label>
    </interactant>
    <organismsDiffer>false</organismsDiffer>
    <experiments>3</experiments>
</comment>
<comment type="interaction">
    <interactant intactId="EBI-3946459">
        <id>Q9C5X0</id>
    </interactant>
    <interactant intactId="EBI-15192325">
        <id>Q8LPR5</id>
        <label>TCP4</label>
    </interactant>
    <organismsDiffer>false</organismsDiffer>
    <experiments>3</experiments>
</comment>
<comment type="interaction">
    <interactant intactId="EBI-3946459">
        <id>Q9C5X0</id>
    </interactant>
    <interactant intactId="EBI-4424568">
        <id>Q9LVG2</id>
        <label>TOE2</label>
    </interactant>
    <organismsDiffer>false</organismsDiffer>
    <experiments>3</experiments>
</comment>
<comment type="interaction">
    <interactant intactId="EBI-3946459">
        <id>Q9C5X0</id>
    </interactant>
    <interactant intactId="EBI-1806244">
        <id>O64722</id>
        <label>ZHD3</label>
    </interactant>
    <organismsDiffer>false</organismsDiffer>
    <experiments>4</experiments>
</comment>
<comment type="subcellular location">
    <subcellularLocation>
        <location evidence="1">Nucleus</location>
    </subcellularLocation>
</comment>
<comment type="induction">
    <text evidence="1">By auxin.</text>
</comment>
<comment type="domain">
    <text>The N-terminal half of the protein contains two conserved domains I and II. Domain I includes a slightly degenerated ERF-associated amphiphilic repression (EAR) motif which seems to be involved in the activity of transcriptional repression. Domain II is required for the correct degradation of the protein through the SCF-mediated ubiquitin-proteasome pathway. Interactions between Aux/IAA proteins and auxin response factors (ARFs) occur through their C-terminal dimerization domains III and IV.</text>
</comment>
<comment type="similarity">
    <text evidence="4">Belongs to the Aux/IAA family.</text>
</comment>
<comment type="caution">
    <text evidence="4">Was originally (Ref.1) erroneously named IAA29.</text>
</comment>
<comment type="sequence caution" evidence="4">
    <conflict type="erroneous gene model prediction">
        <sequence resource="EMBL-CDS" id="AAF31028"/>
    </conflict>
</comment>
<feature type="chain" id="PRO_0000112860" description="Auxin-responsive protein IAA34">
    <location>
        <begin position="1"/>
        <end position="185"/>
    </location>
</feature>
<feature type="domain" description="PB1" evidence="2">
    <location>
        <begin position="92"/>
        <end position="180"/>
    </location>
</feature>
<feature type="short sequence motif" description="EAR-like (transcriptional repression)">
    <location>
        <begin position="63"/>
        <end position="67"/>
    </location>
</feature>
<accession>Q9C5X0</accession>
<accession>Q9M9Q0</accession>
<sequence>MYCSDPPHPLHLVASDKQQKDHKLILSWKKPTMDSDPLGVFPNSPKYHPYYSQTTEFGGVIDLGLSLRTIQHEIYHSSGQRYCSNEGYRRKWGYVKVTMDGLVVGRKVCVLDHGSYSTLAHQLEDMFGMQSVSGLRLFQMESEFCLVYRDEEGLWRNAGDVPWNEFIESVERLRITRRNDAVLPF</sequence>
<protein>
    <recommendedName>
        <fullName>Auxin-responsive protein IAA34</fullName>
    </recommendedName>
    <alternativeName>
        <fullName>Indoleacetic acid-induced protein 34</fullName>
    </alternativeName>
</protein>
<reference key="1">
    <citation type="submission" date="2002-04" db="EMBL/GenBank/DDBJ databases">
        <title>Nucleotide sequence of the Arabidopsis IAA29.</title>
        <authorList>
            <person name="Sessa G."/>
            <person name="Carabelli M."/>
            <person name="Ciarbelli A.R."/>
            <person name="Ruzza V."/>
            <person name="Steindler C."/>
            <person name="Ruberti I."/>
        </authorList>
    </citation>
    <scope>NUCLEOTIDE SEQUENCE [MRNA]</scope>
    <source>
        <strain>cv. Columbia</strain>
    </source>
</reference>
<reference key="2">
    <citation type="journal article" date="2000" name="Nature">
        <title>Sequence and analysis of chromosome 1 of the plant Arabidopsis thaliana.</title>
        <authorList>
            <person name="Theologis A."/>
            <person name="Ecker J.R."/>
            <person name="Palm C.J."/>
            <person name="Federspiel N.A."/>
            <person name="Kaul S."/>
            <person name="White O."/>
            <person name="Alonso J."/>
            <person name="Altafi H."/>
            <person name="Araujo R."/>
            <person name="Bowman C.L."/>
            <person name="Brooks S.Y."/>
            <person name="Buehler E."/>
            <person name="Chan A."/>
            <person name="Chao Q."/>
            <person name="Chen H."/>
            <person name="Cheuk R.F."/>
            <person name="Chin C.W."/>
            <person name="Chung M.K."/>
            <person name="Conn L."/>
            <person name="Conway A.B."/>
            <person name="Conway A.R."/>
            <person name="Creasy T.H."/>
            <person name="Dewar K."/>
            <person name="Dunn P."/>
            <person name="Etgu P."/>
            <person name="Feldblyum T.V."/>
            <person name="Feng J.-D."/>
            <person name="Fong B."/>
            <person name="Fujii C.Y."/>
            <person name="Gill J.E."/>
            <person name="Goldsmith A.D."/>
            <person name="Haas B."/>
            <person name="Hansen N.F."/>
            <person name="Hughes B."/>
            <person name="Huizar L."/>
            <person name="Hunter J.L."/>
            <person name="Jenkins J."/>
            <person name="Johnson-Hopson C."/>
            <person name="Khan S."/>
            <person name="Khaykin E."/>
            <person name="Kim C.J."/>
            <person name="Koo H.L."/>
            <person name="Kremenetskaia I."/>
            <person name="Kurtz D.B."/>
            <person name="Kwan A."/>
            <person name="Lam B."/>
            <person name="Langin-Hooper S."/>
            <person name="Lee A."/>
            <person name="Lee J.M."/>
            <person name="Lenz C.A."/>
            <person name="Li J.H."/>
            <person name="Li Y.-P."/>
            <person name="Lin X."/>
            <person name="Liu S.X."/>
            <person name="Liu Z.A."/>
            <person name="Luros J.S."/>
            <person name="Maiti R."/>
            <person name="Marziali A."/>
            <person name="Militscher J."/>
            <person name="Miranda M."/>
            <person name="Nguyen M."/>
            <person name="Nierman W.C."/>
            <person name="Osborne B.I."/>
            <person name="Pai G."/>
            <person name="Peterson J."/>
            <person name="Pham P.K."/>
            <person name="Rizzo M."/>
            <person name="Rooney T."/>
            <person name="Rowley D."/>
            <person name="Sakano H."/>
            <person name="Salzberg S.L."/>
            <person name="Schwartz J.R."/>
            <person name="Shinn P."/>
            <person name="Southwick A.M."/>
            <person name="Sun H."/>
            <person name="Tallon L.J."/>
            <person name="Tambunga G."/>
            <person name="Toriumi M.J."/>
            <person name="Town C.D."/>
            <person name="Utterback T."/>
            <person name="Van Aken S."/>
            <person name="Vaysberg M."/>
            <person name="Vysotskaia V.S."/>
            <person name="Walker M."/>
            <person name="Wu D."/>
            <person name="Yu G."/>
            <person name="Fraser C.M."/>
            <person name="Venter J.C."/>
            <person name="Davis R.W."/>
        </authorList>
    </citation>
    <scope>NUCLEOTIDE SEQUENCE [LARGE SCALE GENOMIC DNA]</scope>
    <source>
        <strain>cv. Columbia</strain>
    </source>
</reference>
<reference key="3">
    <citation type="journal article" date="2017" name="Plant J.">
        <title>Araport11: a complete reannotation of the Arabidopsis thaliana reference genome.</title>
        <authorList>
            <person name="Cheng C.Y."/>
            <person name="Krishnakumar V."/>
            <person name="Chan A.P."/>
            <person name="Thibaud-Nissen F."/>
            <person name="Schobel S."/>
            <person name="Town C.D."/>
        </authorList>
    </citation>
    <scope>GENOME REANNOTATION</scope>
    <source>
        <strain>cv. Columbia</strain>
    </source>
</reference>
<reference key="4">
    <citation type="journal article" date="2003" name="Science">
        <title>Empirical analysis of transcriptional activity in the Arabidopsis genome.</title>
        <authorList>
            <person name="Yamada K."/>
            <person name="Lim J."/>
            <person name="Dale J.M."/>
            <person name="Chen H."/>
            <person name="Shinn P."/>
            <person name="Palm C.J."/>
            <person name="Southwick A.M."/>
            <person name="Wu H.C."/>
            <person name="Kim C.J."/>
            <person name="Nguyen M."/>
            <person name="Pham P.K."/>
            <person name="Cheuk R.F."/>
            <person name="Karlin-Newmann G."/>
            <person name="Liu S.X."/>
            <person name="Lam B."/>
            <person name="Sakano H."/>
            <person name="Wu T."/>
            <person name="Yu G."/>
            <person name="Miranda M."/>
            <person name="Quach H.L."/>
            <person name="Tripp M."/>
            <person name="Chang C.H."/>
            <person name="Lee J.M."/>
            <person name="Toriumi M.J."/>
            <person name="Chan M.M."/>
            <person name="Tang C.C."/>
            <person name="Onodera C.S."/>
            <person name="Deng J.M."/>
            <person name="Akiyama K."/>
            <person name="Ansari Y."/>
            <person name="Arakawa T."/>
            <person name="Banh J."/>
            <person name="Banno F."/>
            <person name="Bowser L."/>
            <person name="Brooks S.Y."/>
            <person name="Carninci P."/>
            <person name="Chao Q."/>
            <person name="Choy N."/>
            <person name="Enju A."/>
            <person name="Goldsmith A.D."/>
            <person name="Gurjal M."/>
            <person name="Hansen N.F."/>
            <person name="Hayashizaki Y."/>
            <person name="Johnson-Hopson C."/>
            <person name="Hsuan V.W."/>
            <person name="Iida K."/>
            <person name="Karnes M."/>
            <person name="Khan S."/>
            <person name="Koesema E."/>
            <person name="Ishida J."/>
            <person name="Jiang P.X."/>
            <person name="Jones T."/>
            <person name="Kawai J."/>
            <person name="Kamiya A."/>
            <person name="Meyers C."/>
            <person name="Nakajima M."/>
            <person name="Narusaka M."/>
            <person name="Seki M."/>
            <person name="Sakurai T."/>
            <person name="Satou M."/>
            <person name="Tamse R."/>
            <person name="Vaysberg M."/>
            <person name="Wallender E.K."/>
            <person name="Wong C."/>
            <person name="Yamamura Y."/>
            <person name="Yuan S."/>
            <person name="Shinozaki K."/>
            <person name="Davis R.W."/>
            <person name="Theologis A."/>
            <person name="Ecker J.R."/>
        </authorList>
    </citation>
    <scope>NUCLEOTIDE SEQUENCE [LARGE SCALE MRNA]</scope>
    <source>
        <strain>cv. Columbia</strain>
    </source>
</reference>
<reference key="5">
    <citation type="journal article" date="2002" name="Plant Mol. Biol.">
        <title>Genetics of Aux/IAA and ARF action in plant growth and development.</title>
        <authorList>
            <person name="Liscum E."/>
            <person name="Reed J.W."/>
        </authorList>
    </citation>
    <scope>GENE FAMILY</scope>
    <scope>NOMENCLATURE</scope>
    <scope>FUNCTION</scope>
</reference>
<reference key="6">
    <citation type="journal article" date="2004" name="Plant Cell">
        <title>Aux/IAA proteins contain a potent transcriptional repression domain.</title>
        <authorList>
            <person name="Tiwari S.B."/>
            <person name="Hagen G."/>
            <person name="Guilfoyle T.J."/>
        </authorList>
    </citation>
    <scope>TRANSCRIPTIONAL REPRESSION DOMAIN</scope>
</reference>
<gene>
    <name type="primary">IAA34</name>
    <name type="ordered locus">At1g15050</name>
    <name type="ORF">T15D22.10</name>
</gene>
<dbReference type="EMBL" id="AJ458327">
    <property type="protein sequence ID" value="CAD30209.1"/>
    <property type="molecule type" value="mRNA"/>
</dbReference>
<dbReference type="EMBL" id="AC012189">
    <property type="protein sequence ID" value="AAF31028.1"/>
    <property type="status" value="ALT_SEQ"/>
    <property type="molecule type" value="Genomic_DNA"/>
</dbReference>
<dbReference type="EMBL" id="CP002684">
    <property type="protein sequence ID" value="AEE29261.1"/>
    <property type="molecule type" value="Genomic_DNA"/>
</dbReference>
<dbReference type="EMBL" id="AF334713">
    <property type="protein sequence ID" value="AAG50091.1"/>
    <property type="molecule type" value="mRNA"/>
</dbReference>
<dbReference type="PIR" id="B86284">
    <property type="entry name" value="B86284"/>
</dbReference>
<dbReference type="RefSeq" id="NP_172959.2">
    <property type="nucleotide sequence ID" value="NM_101375.3"/>
</dbReference>
<dbReference type="SMR" id="Q9C5X0"/>
<dbReference type="BioGRID" id="23310">
    <property type="interactions" value="70"/>
</dbReference>
<dbReference type="FunCoup" id="Q9C5X0">
    <property type="interactions" value="293"/>
</dbReference>
<dbReference type="IntAct" id="Q9C5X0">
    <property type="interactions" value="67"/>
</dbReference>
<dbReference type="STRING" id="3702.Q9C5X0"/>
<dbReference type="PaxDb" id="3702-AT1G15050.1"/>
<dbReference type="DNASU" id="838070"/>
<dbReference type="EnsemblPlants" id="AT1G15050.1">
    <property type="protein sequence ID" value="AT1G15050.1"/>
    <property type="gene ID" value="AT1G15050"/>
</dbReference>
<dbReference type="GeneID" id="838070"/>
<dbReference type="Gramene" id="AT1G15050.1">
    <property type="protein sequence ID" value="AT1G15050.1"/>
    <property type="gene ID" value="AT1G15050"/>
</dbReference>
<dbReference type="KEGG" id="ath:AT1G15050"/>
<dbReference type="Araport" id="AT1G15050"/>
<dbReference type="TAIR" id="AT1G15050">
    <property type="gene designation" value="IAA34"/>
</dbReference>
<dbReference type="eggNOG" id="ENOG502RZE6">
    <property type="taxonomic scope" value="Eukaryota"/>
</dbReference>
<dbReference type="HOGENOM" id="CLU_117411_0_0_1"/>
<dbReference type="InParanoid" id="Q9C5X0"/>
<dbReference type="PhylomeDB" id="Q9C5X0"/>
<dbReference type="PRO" id="PR:Q9C5X0"/>
<dbReference type="Proteomes" id="UP000006548">
    <property type="component" value="Chromosome 1"/>
</dbReference>
<dbReference type="ExpressionAtlas" id="Q9C5X0">
    <property type="expression patterns" value="baseline and differential"/>
</dbReference>
<dbReference type="GO" id="GO:0005634">
    <property type="term" value="C:nucleus"/>
    <property type="evidence" value="ECO:0007669"/>
    <property type="project" value="UniProtKB-SubCell"/>
</dbReference>
<dbReference type="GO" id="GO:0003700">
    <property type="term" value="F:DNA-binding transcription factor activity"/>
    <property type="evidence" value="ECO:0000250"/>
    <property type="project" value="TAIR"/>
</dbReference>
<dbReference type="GO" id="GO:0009734">
    <property type="term" value="P:auxin-activated signaling pathway"/>
    <property type="evidence" value="ECO:0007669"/>
    <property type="project" value="UniProtKB-KW"/>
</dbReference>
<dbReference type="GO" id="GO:0009733">
    <property type="term" value="P:response to auxin"/>
    <property type="evidence" value="ECO:0000304"/>
    <property type="project" value="TAIR"/>
</dbReference>
<dbReference type="FunFam" id="3.10.20.90:FF:000473">
    <property type="entry name" value="Auxin-responsive protein"/>
    <property type="match status" value="1"/>
</dbReference>
<dbReference type="Gene3D" id="3.10.20.90">
    <property type="entry name" value="Phosphatidylinositol 3-kinase Catalytic Subunit, Chain A, domain 1"/>
    <property type="match status" value="1"/>
</dbReference>
<dbReference type="InterPro" id="IPR033389">
    <property type="entry name" value="AUX/IAA_dom"/>
</dbReference>
<dbReference type="InterPro" id="IPR003311">
    <property type="entry name" value="AUX_IAA"/>
</dbReference>
<dbReference type="InterPro" id="IPR053793">
    <property type="entry name" value="PB1-like"/>
</dbReference>
<dbReference type="PANTHER" id="PTHR31734">
    <property type="entry name" value="AUXIN-RESPONSIVE PROTEIN IAA17"/>
    <property type="match status" value="1"/>
</dbReference>
<dbReference type="PANTHER" id="PTHR31734:SF255">
    <property type="entry name" value="AUXIN-RESPONSIVE PROTEIN IAA34"/>
    <property type="match status" value="1"/>
</dbReference>
<dbReference type="Pfam" id="PF02309">
    <property type="entry name" value="AUX_IAA"/>
    <property type="match status" value="1"/>
</dbReference>
<dbReference type="SUPFAM" id="SSF54277">
    <property type="entry name" value="CAD &amp; PB1 domains"/>
    <property type="match status" value="1"/>
</dbReference>
<dbReference type="PROSITE" id="PS51745">
    <property type="entry name" value="PB1"/>
    <property type="match status" value="1"/>
</dbReference>
<name>IAA34_ARATH</name>